<dbReference type="EC" id="4.2.1.8" evidence="1"/>
<dbReference type="EMBL" id="AE017333">
    <property type="protein sequence ID" value="AAU40260.1"/>
    <property type="molecule type" value="Genomic_DNA"/>
</dbReference>
<dbReference type="EMBL" id="CP000002">
    <property type="protein sequence ID" value="AAU22907.1"/>
    <property type="molecule type" value="Genomic_DNA"/>
</dbReference>
<dbReference type="SMR" id="Q65L04"/>
<dbReference type="STRING" id="279010.BL03802"/>
<dbReference type="KEGG" id="bld:BLi01356"/>
<dbReference type="KEGG" id="bli:BL03802"/>
<dbReference type="eggNOG" id="COG1312">
    <property type="taxonomic scope" value="Bacteria"/>
</dbReference>
<dbReference type="HOGENOM" id="CLU_058621_1_0_9"/>
<dbReference type="UniPathway" id="UPA00246"/>
<dbReference type="Proteomes" id="UP000000606">
    <property type="component" value="Chromosome"/>
</dbReference>
<dbReference type="GO" id="GO:0008198">
    <property type="term" value="F:ferrous iron binding"/>
    <property type="evidence" value="ECO:0007669"/>
    <property type="project" value="TreeGrafter"/>
</dbReference>
<dbReference type="GO" id="GO:0030145">
    <property type="term" value="F:manganese ion binding"/>
    <property type="evidence" value="ECO:0007669"/>
    <property type="project" value="TreeGrafter"/>
</dbReference>
<dbReference type="GO" id="GO:0008927">
    <property type="term" value="F:mannonate dehydratase activity"/>
    <property type="evidence" value="ECO:0007669"/>
    <property type="project" value="UniProtKB-UniRule"/>
</dbReference>
<dbReference type="GO" id="GO:0042840">
    <property type="term" value="P:D-glucuronate catabolic process"/>
    <property type="evidence" value="ECO:0007669"/>
    <property type="project" value="TreeGrafter"/>
</dbReference>
<dbReference type="Gene3D" id="3.20.20.150">
    <property type="entry name" value="Divalent-metal-dependent TIM barrel enzymes"/>
    <property type="match status" value="1"/>
</dbReference>
<dbReference type="HAMAP" id="MF_00106">
    <property type="entry name" value="UxuA"/>
    <property type="match status" value="1"/>
</dbReference>
<dbReference type="InterPro" id="IPR004628">
    <property type="entry name" value="Man_deHydtase"/>
</dbReference>
<dbReference type="InterPro" id="IPR036237">
    <property type="entry name" value="Xyl_isomerase-like_sf"/>
</dbReference>
<dbReference type="NCBIfam" id="NF003027">
    <property type="entry name" value="PRK03906.1"/>
    <property type="match status" value="2"/>
</dbReference>
<dbReference type="NCBIfam" id="TIGR00695">
    <property type="entry name" value="uxuA"/>
    <property type="match status" value="1"/>
</dbReference>
<dbReference type="PANTHER" id="PTHR30387">
    <property type="entry name" value="MANNONATE DEHYDRATASE"/>
    <property type="match status" value="1"/>
</dbReference>
<dbReference type="PANTHER" id="PTHR30387:SF2">
    <property type="entry name" value="MANNONATE DEHYDRATASE"/>
    <property type="match status" value="1"/>
</dbReference>
<dbReference type="Pfam" id="PF03786">
    <property type="entry name" value="UxuA"/>
    <property type="match status" value="1"/>
</dbReference>
<dbReference type="PIRSF" id="PIRSF016049">
    <property type="entry name" value="Man_dehyd"/>
    <property type="match status" value="1"/>
</dbReference>
<dbReference type="SUPFAM" id="SSF51658">
    <property type="entry name" value="Xylose isomerase-like"/>
    <property type="match status" value="1"/>
</dbReference>
<gene>
    <name evidence="1" type="primary">uxuA1</name>
    <name type="ordered locus">BLi01356</name>
    <name type="ordered locus">BL03802</name>
</gene>
<comment type="function">
    <text evidence="1">Catalyzes the dehydration of D-mannonate.</text>
</comment>
<comment type="catalytic activity">
    <reaction evidence="1">
        <text>D-mannonate = 2-dehydro-3-deoxy-D-gluconate + H2O</text>
        <dbReference type="Rhea" id="RHEA:20097"/>
        <dbReference type="ChEBI" id="CHEBI:15377"/>
        <dbReference type="ChEBI" id="CHEBI:17767"/>
        <dbReference type="ChEBI" id="CHEBI:57990"/>
        <dbReference type="EC" id="4.2.1.8"/>
    </reaction>
</comment>
<comment type="cofactor">
    <cofactor evidence="1">
        <name>Fe(2+)</name>
        <dbReference type="ChEBI" id="CHEBI:29033"/>
    </cofactor>
    <cofactor evidence="1">
        <name>Mn(2+)</name>
        <dbReference type="ChEBI" id="CHEBI:29035"/>
    </cofactor>
</comment>
<comment type="pathway">
    <text evidence="1">Carbohydrate metabolism; pentose and glucuronate interconversion.</text>
</comment>
<comment type="similarity">
    <text evidence="1">Belongs to the mannonate dehydratase family.</text>
</comment>
<evidence type="ECO:0000255" key="1">
    <source>
        <dbReference type="HAMAP-Rule" id="MF_00106"/>
    </source>
</evidence>
<protein>
    <recommendedName>
        <fullName evidence="1">Mannonate dehydratase 1</fullName>
        <ecNumber evidence="1">4.2.1.8</ecNumber>
    </recommendedName>
    <alternativeName>
        <fullName evidence="1">D-mannonate hydro-lyase 1</fullName>
    </alternativeName>
</protein>
<name>UXUA1_BACLD</name>
<proteinExistence type="inferred from homology"/>
<feature type="chain" id="PRO_0000231049" description="Mannonate dehydratase 1">
    <location>
        <begin position="1"/>
        <end position="365"/>
    </location>
</feature>
<accession>Q65L04</accession>
<accession>Q62WF1</accession>
<reference key="1">
    <citation type="journal article" date="2004" name="J. Mol. Microbiol. Biotechnol.">
        <title>The complete genome sequence of Bacillus licheniformis DSM13, an organism with great industrial potential.</title>
        <authorList>
            <person name="Veith B."/>
            <person name="Herzberg C."/>
            <person name="Steckel S."/>
            <person name="Feesche J."/>
            <person name="Maurer K.H."/>
            <person name="Ehrenreich P."/>
            <person name="Baeumer S."/>
            <person name="Henne A."/>
            <person name="Liesegang H."/>
            <person name="Merkl R."/>
            <person name="Ehrenreich A."/>
            <person name="Gottschalk G."/>
        </authorList>
    </citation>
    <scope>NUCLEOTIDE SEQUENCE [LARGE SCALE GENOMIC DNA]</scope>
    <source>
        <strain>ATCC 14580 / DSM 13 / JCM 2505 / CCUG 7422 / NBRC 12200 / NCIMB 9375 / NCTC 10341 / NRRL NRS-1264 / Gibson 46</strain>
    </source>
</reference>
<reference key="2">
    <citation type="journal article" date="2004" name="Genome Biol.">
        <title>Complete genome sequence of the industrial bacterium Bacillus licheniformis and comparisons with closely related Bacillus species.</title>
        <authorList>
            <person name="Rey M.W."/>
            <person name="Ramaiya P."/>
            <person name="Nelson B.A."/>
            <person name="Brody-Karpin S.D."/>
            <person name="Zaretsky E.J."/>
            <person name="Tang M."/>
            <person name="Lopez de Leon A."/>
            <person name="Xiang H."/>
            <person name="Gusti V."/>
            <person name="Clausen I.G."/>
            <person name="Olsen P.B."/>
            <person name="Rasmussen M.D."/>
            <person name="Andersen J.T."/>
            <person name="Joergensen P.L."/>
            <person name="Larsen T.S."/>
            <person name="Sorokin A."/>
            <person name="Bolotin A."/>
            <person name="Lapidus A."/>
            <person name="Galleron N."/>
            <person name="Ehrlich S.D."/>
            <person name="Berka R.M."/>
        </authorList>
    </citation>
    <scope>NUCLEOTIDE SEQUENCE [LARGE SCALE GENOMIC DNA]</scope>
    <source>
        <strain>ATCC 14580 / DSM 13 / JCM 2505 / CCUG 7422 / NBRC 12200 / NCIMB 9375 / NCTC 10341 / NRRL NRS-1264 / Gibson 46</strain>
    </source>
</reference>
<organism>
    <name type="scientific">Bacillus licheniformis (strain ATCC 14580 / DSM 13 / JCM 2505 / CCUG 7422 / NBRC 12200 / NCIMB 9375 / NCTC 10341 / NRRL NRS-1264 / Gibson 46)</name>
    <dbReference type="NCBI Taxonomy" id="279010"/>
    <lineage>
        <taxon>Bacteria</taxon>
        <taxon>Bacillati</taxon>
        <taxon>Bacillota</taxon>
        <taxon>Bacilli</taxon>
        <taxon>Bacillales</taxon>
        <taxon>Bacillaceae</taxon>
        <taxon>Bacillus</taxon>
    </lineage>
</organism>
<keyword id="KW-0408">Iron</keyword>
<keyword id="KW-0456">Lyase</keyword>
<keyword id="KW-0464">Manganese</keyword>
<keyword id="KW-1185">Reference proteome</keyword>
<sequence>MKMVFRWYGEGNDSVTLEQIRQIPGVEGIVWALHHQPPGEEWPLEEILEVKRQCEQHGFHIEVVESVNIHEDIKLGLPTRDLYIEKYKRTIENLAKAGVKVICYNFMPVFDWLRTDLYKKAPDGSTALFYEHAKVHTIDPFALVDQIAKHPEFTMPGWEPERLEHLTRLFEAYQNVTEEDLWSHLHYFLERIIPTAARCGIKMAIHPDDPPWPVFGLPRIMTSGESIGRLLQLVDHPANGVTLCSGSLGANPENDISAMIHAYADRIPFAHIRNVKVYENGDFIETSHRTKDGTVDICGIVKAYHETGFSGYVRPDHGRHIWDEKCRPGYGLYDRALGIMYLWGIWDSLNREKQEASKCLKSMKI</sequence>